<protein>
    <recommendedName>
        <fullName>Vacuolar protein sorting-associated protein 27</fullName>
    </recommendedName>
</protein>
<feature type="chain" id="PRO_0000292517" description="Vacuolar protein sorting-associated protein 27">
    <location>
        <begin position="1"/>
        <end position="603"/>
    </location>
</feature>
<feature type="domain" description="VHS" evidence="4">
    <location>
        <begin position="20"/>
        <end position="151"/>
    </location>
</feature>
<feature type="domain" description="UIM 1" evidence="3">
    <location>
        <begin position="253"/>
        <end position="272"/>
    </location>
</feature>
<feature type="domain" description="UIM 2" evidence="3">
    <location>
        <begin position="292"/>
        <end position="311"/>
    </location>
</feature>
<feature type="zinc finger region" description="FYVE-type; atypical" evidence="2">
    <location>
        <begin position="171"/>
        <end position="231"/>
    </location>
</feature>
<feature type="region of interest" description="Disordered" evidence="5">
    <location>
        <begin position="273"/>
        <end position="294"/>
    </location>
</feature>
<feature type="region of interest" description="Disordered" evidence="5">
    <location>
        <begin position="320"/>
        <end position="339"/>
    </location>
</feature>
<feature type="region of interest" description="Disordered" evidence="5">
    <location>
        <begin position="496"/>
        <end position="561"/>
    </location>
</feature>
<feature type="compositionally biased region" description="Basic and acidic residues" evidence="5">
    <location>
        <begin position="281"/>
        <end position="294"/>
    </location>
</feature>
<feature type="compositionally biased region" description="Polar residues" evidence="5">
    <location>
        <begin position="320"/>
        <end position="329"/>
    </location>
</feature>
<feature type="compositionally biased region" description="Basic and acidic residues" evidence="5">
    <location>
        <begin position="547"/>
        <end position="561"/>
    </location>
</feature>
<feature type="binding site" evidence="2">
    <location>
        <position position="177"/>
    </location>
    <ligand>
        <name>Zn(2+)</name>
        <dbReference type="ChEBI" id="CHEBI:29105"/>
        <label>1</label>
    </ligand>
</feature>
<feature type="binding site" evidence="2">
    <location>
        <position position="180"/>
    </location>
    <ligand>
        <name>Zn(2+)</name>
        <dbReference type="ChEBI" id="CHEBI:29105"/>
        <label>1</label>
    </ligand>
</feature>
<feature type="binding site" evidence="2">
    <location>
        <position position="193"/>
    </location>
    <ligand>
        <name>Zn(2+)</name>
        <dbReference type="ChEBI" id="CHEBI:29105"/>
        <label>2</label>
    </ligand>
</feature>
<feature type="binding site" evidence="2">
    <location>
        <position position="196"/>
    </location>
    <ligand>
        <name>Zn(2+)</name>
        <dbReference type="ChEBI" id="CHEBI:29105"/>
        <label>2</label>
    </ligand>
</feature>
<feature type="binding site" evidence="2">
    <location>
        <position position="201"/>
    </location>
    <ligand>
        <name>Zn(2+)</name>
        <dbReference type="ChEBI" id="CHEBI:29105"/>
        <label>1</label>
    </ligand>
</feature>
<feature type="binding site" evidence="2">
    <location>
        <position position="204"/>
    </location>
    <ligand>
        <name>Zn(2+)</name>
        <dbReference type="ChEBI" id="CHEBI:29105"/>
        <label>1</label>
    </ligand>
</feature>
<feature type="binding site" evidence="2">
    <location>
        <position position="223"/>
    </location>
    <ligand>
        <name>Zn(2+)</name>
        <dbReference type="ChEBI" id="CHEBI:29105"/>
        <label>2</label>
    </ligand>
</feature>
<feature type="binding site" evidence="2">
    <location>
        <position position="226"/>
    </location>
    <ligand>
        <name>Zn(2+)</name>
        <dbReference type="ChEBI" id="CHEBI:29105"/>
        <label>2</label>
    </ligand>
</feature>
<evidence type="ECO:0000250" key="1"/>
<evidence type="ECO:0000255" key="2">
    <source>
        <dbReference type="PROSITE-ProRule" id="PRU00091"/>
    </source>
</evidence>
<evidence type="ECO:0000255" key="3">
    <source>
        <dbReference type="PROSITE-ProRule" id="PRU00213"/>
    </source>
</evidence>
<evidence type="ECO:0000255" key="4">
    <source>
        <dbReference type="PROSITE-ProRule" id="PRU00218"/>
    </source>
</evidence>
<evidence type="ECO:0000256" key="5">
    <source>
        <dbReference type="SAM" id="MobiDB-lite"/>
    </source>
</evidence>
<evidence type="ECO:0000305" key="6"/>
<organism>
    <name type="scientific">Kluyveromyces lactis (strain ATCC 8585 / CBS 2359 / DSM 70799 / NBRC 1267 / NRRL Y-1140 / WM37)</name>
    <name type="common">Yeast</name>
    <name type="synonym">Candida sphaerica</name>
    <dbReference type="NCBI Taxonomy" id="284590"/>
    <lineage>
        <taxon>Eukaryota</taxon>
        <taxon>Fungi</taxon>
        <taxon>Dikarya</taxon>
        <taxon>Ascomycota</taxon>
        <taxon>Saccharomycotina</taxon>
        <taxon>Saccharomycetes</taxon>
        <taxon>Saccharomycetales</taxon>
        <taxon>Saccharomycetaceae</taxon>
        <taxon>Kluyveromyces</taxon>
    </lineage>
</organism>
<accession>Q6CL17</accession>
<gene>
    <name type="primary">VPS27</name>
    <name type="ordered locus">KLLA0F06446g</name>
</gene>
<sequence>MALPSMSVSEFDALIEQCTNEKIPNGEIDLSAALELSDMIRSRRLPPKDAMRCLKKRVLQTRNNQNLQFSVWRLVEVCMKNGGVPFLKEVCSREFMDCLEQVILAESTDYELEQFCSRLVGELYLAFKNDSQLSYVVKVYQKLVSRGIDMENLKPTENLNAMFDAKTPADWIDSDACMICSTQFTLLNRKHHCRSCGGVFCQLHSSKFIPLPDLGIFEPVRVCDNCFEDYDLKRKSSKGKKSKGKKRFTRSEDDDEDLRRAIELSLKENGRDADTFIPDTAKLEPLKKDPDEEDPDLKAAIEASLREHQQEEMRRKSQAKNMYNTSSPSVAPPIENNYDLSSNEEEDIHLFASLVERMKTQPPTAVLEDTQLQQLYQKVLGVRPKLNYALSDTVSKYNTVYEMNSKISDIMNMYDSMLEMQLRNISLSQQYAIPESGRNSYGYHQNMPQYDQPNSPQIIAQPQIHSPQQNERTILNYASPVSQHLSNGATTNTYQQGSALQNQQPAAPEPQPVSFEKPSTTSQLEGLILEEPSEPPYPDENTTIENPKIEQASERPYPDDHLKQENITSFDFPTVPLRKLSIHGSEQEVKEEPVQQEQLLIEL</sequence>
<reference key="1">
    <citation type="journal article" date="2004" name="Nature">
        <title>Genome evolution in yeasts.</title>
        <authorList>
            <person name="Dujon B."/>
            <person name="Sherman D."/>
            <person name="Fischer G."/>
            <person name="Durrens P."/>
            <person name="Casaregola S."/>
            <person name="Lafontaine I."/>
            <person name="de Montigny J."/>
            <person name="Marck C."/>
            <person name="Neuveglise C."/>
            <person name="Talla E."/>
            <person name="Goffard N."/>
            <person name="Frangeul L."/>
            <person name="Aigle M."/>
            <person name="Anthouard V."/>
            <person name="Babour A."/>
            <person name="Barbe V."/>
            <person name="Barnay S."/>
            <person name="Blanchin S."/>
            <person name="Beckerich J.-M."/>
            <person name="Beyne E."/>
            <person name="Bleykasten C."/>
            <person name="Boisrame A."/>
            <person name="Boyer J."/>
            <person name="Cattolico L."/>
            <person name="Confanioleri F."/>
            <person name="de Daruvar A."/>
            <person name="Despons L."/>
            <person name="Fabre E."/>
            <person name="Fairhead C."/>
            <person name="Ferry-Dumazet H."/>
            <person name="Groppi A."/>
            <person name="Hantraye F."/>
            <person name="Hennequin C."/>
            <person name="Jauniaux N."/>
            <person name="Joyet P."/>
            <person name="Kachouri R."/>
            <person name="Kerrest A."/>
            <person name="Koszul R."/>
            <person name="Lemaire M."/>
            <person name="Lesur I."/>
            <person name="Ma L."/>
            <person name="Muller H."/>
            <person name="Nicaud J.-M."/>
            <person name="Nikolski M."/>
            <person name="Oztas S."/>
            <person name="Ozier-Kalogeropoulos O."/>
            <person name="Pellenz S."/>
            <person name="Potier S."/>
            <person name="Richard G.-F."/>
            <person name="Straub M.-L."/>
            <person name="Suleau A."/>
            <person name="Swennen D."/>
            <person name="Tekaia F."/>
            <person name="Wesolowski-Louvel M."/>
            <person name="Westhof E."/>
            <person name="Wirth B."/>
            <person name="Zeniou-Meyer M."/>
            <person name="Zivanovic Y."/>
            <person name="Bolotin-Fukuhara M."/>
            <person name="Thierry A."/>
            <person name="Bouchier C."/>
            <person name="Caudron B."/>
            <person name="Scarpelli C."/>
            <person name="Gaillardin C."/>
            <person name="Weissenbach J."/>
            <person name="Wincker P."/>
            <person name="Souciet J.-L."/>
        </authorList>
    </citation>
    <scope>NUCLEOTIDE SEQUENCE [LARGE SCALE GENOMIC DNA]</scope>
    <source>
        <strain>ATCC 8585 / CBS 2359 / DSM 70799 / NBRC 1267 / NRRL Y-1140 / WM37</strain>
    </source>
</reference>
<proteinExistence type="inferred from homology"/>
<keyword id="KW-0967">Endosome</keyword>
<keyword id="KW-0472">Membrane</keyword>
<keyword id="KW-0479">Metal-binding</keyword>
<keyword id="KW-1185">Reference proteome</keyword>
<keyword id="KW-0677">Repeat</keyword>
<keyword id="KW-0862">Zinc</keyword>
<keyword id="KW-0863">Zinc-finger</keyword>
<dbReference type="EMBL" id="CR382126">
    <property type="protein sequence ID" value="CAG98080.1"/>
    <property type="molecule type" value="Genomic_DNA"/>
</dbReference>
<dbReference type="RefSeq" id="XP_455372.1">
    <property type="nucleotide sequence ID" value="XM_455372.1"/>
</dbReference>
<dbReference type="SMR" id="Q6CL17"/>
<dbReference type="FunCoup" id="Q6CL17">
    <property type="interactions" value="137"/>
</dbReference>
<dbReference type="STRING" id="284590.Q6CL17"/>
<dbReference type="PaxDb" id="284590-Q6CL17"/>
<dbReference type="KEGG" id="kla:KLLA0_F06446g"/>
<dbReference type="eggNOG" id="KOG1818">
    <property type="taxonomic scope" value="Eukaryota"/>
</dbReference>
<dbReference type="HOGENOM" id="CLU_011862_2_0_1"/>
<dbReference type="InParanoid" id="Q6CL17"/>
<dbReference type="OMA" id="HTWGGNT"/>
<dbReference type="Proteomes" id="UP000000598">
    <property type="component" value="Chromosome F"/>
</dbReference>
<dbReference type="GO" id="GO:0010008">
    <property type="term" value="C:endosome membrane"/>
    <property type="evidence" value="ECO:0007669"/>
    <property type="project" value="UniProtKB-SubCell"/>
</dbReference>
<dbReference type="GO" id="GO:0033565">
    <property type="term" value="C:ESCRT-0 complex"/>
    <property type="evidence" value="ECO:0007669"/>
    <property type="project" value="TreeGrafter"/>
</dbReference>
<dbReference type="GO" id="GO:0032266">
    <property type="term" value="F:phosphatidylinositol-3-phosphate binding"/>
    <property type="evidence" value="ECO:0007669"/>
    <property type="project" value="UniProtKB-ARBA"/>
</dbReference>
<dbReference type="GO" id="GO:0043130">
    <property type="term" value="F:ubiquitin binding"/>
    <property type="evidence" value="ECO:0007669"/>
    <property type="project" value="InterPro"/>
</dbReference>
<dbReference type="GO" id="GO:0008270">
    <property type="term" value="F:zinc ion binding"/>
    <property type="evidence" value="ECO:0007669"/>
    <property type="project" value="UniProtKB-KW"/>
</dbReference>
<dbReference type="GO" id="GO:0006623">
    <property type="term" value="P:protein targeting to vacuole"/>
    <property type="evidence" value="ECO:0007669"/>
    <property type="project" value="TreeGrafter"/>
</dbReference>
<dbReference type="GO" id="GO:0043328">
    <property type="term" value="P:protein transport to vacuole involved in ubiquitin-dependent protein catabolic process via the multivesicular body sorting pathway"/>
    <property type="evidence" value="ECO:0007669"/>
    <property type="project" value="TreeGrafter"/>
</dbReference>
<dbReference type="CDD" id="cd21385">
    <property type="entry name" value="GAT_Vps27"/>
    <property type="match status" value="1"/>
</dbReference>
<dbReference type="CDD" id="cd16979">
    <property type="entry name" value="VHS_Vps27"/>
    <property type="match status" value="1"/>
</dbReference>
<dbReference type="Gene3D" id="1.20.5.1940">
    <property type="match status" value="1"/>
</dbReference>
<dbReference type="Gene3D" id="1.25.40.90">
    <property type="match status" value="1"/>
</dbReference>
<dbReference type="Gene3D" id="6.10.140.100">
    <property type="match status" value="1"/>
</dbReference>
<dbReference type="Gene3D" id="3.30.40.10">
    <property type="entry name" value="Zinc/RING finger domain, C3HC4 (zinc finger)"/>
    <property type="match status" value="1"/>
</dbReference>
<dbReference type="InterPro" id="IPR008942">
    <property type="entry name" value="ENTH_VHS"/>
</dbReference>
<dbReference type="InterPro" id="IPR017073">
    <property type="entry name" value="HGS/VPS27"/>
</dbReference>
<dbReference type="InterPro" id="IPR003903">
    <property type="entry name" value="UIM_dom"/>
</dbReference>
<dbReference type="InterPro" id="IPR002014">
    <property type="entry name" value="VHS_dom"/>
</dbReference>
<dbReference type="InterPro" id="IPR049425">
    <property type="entry name" value="Vps27_GAT-like"/>
</dbReference>
<dbReference type="InterPro" id="IPR000306">
    <property type="entry name" value="Znf_FYVE"/>
</dbReference>
<dbReference type="InterPro" id="IPR017455">
    <property type="entry name" value="Znf_FYVE-rel"/>
</dbReference>
<dbReference type="InterPro" id="IPR011011">
    <property type="entry name" value="Znf_FYVE_PHD"/>
</dbReference>
<dbReference type="InterPro" id="IPR013083">
    <property type="entry name" value="Znf_RING/FYVE/PHD"/>
</dbReference>
<dbReference type="PANTHER" id="PTHR47794">
    <property type="entry name" value="VACUOLAR PROTEIN SORTING-ASSOCIATED PROTEIN 27"/>
    <property type="match status" value="1"/>
</dbReference>
<dbReference type="PANTHER" id="PTHR47794:SF1">
    <property type="entry name" value="VACUOLAR PROTEIN SORTING-ASSOCIATED PROTEIN 27"/>
    <property type="match status" value="1"/>
</dbReference>
<dbReference type="Pfam" id="PF01363">
    <property type="entry name" value="FYVE"/>
    <property type="match status" value="1"/>
</dbReference>
<dbReference type="Pfam" id="PF02809">
    <property type="entry name" value="UIM"/>
    <property type="match status" value="2"/>
</dbReference>
<dbReference type="Pfam" id="PF00790">
    <property type="entry name" value="VHS"/>
    <property type="match status" value="1"/>
</dbReference>
<dbReference type="Pfam" id="PF21356">
    <property type="entry name" value="Vps27_GAT-like"/>
    <property type="match status" value="1"/>
</dbReference>
<dbReference type="PIRSF" id="PIRSF036956">
    <property type="entry name" value="Hrs_Vps27"/>
    <property type="match status" value="1"/>
</dbReference>
<dbReference type="SMART" id="SM00064">
    <property type="entry name" value="FYVE"/>
    <property type="match status" value="1"/>
</dbReference>
<dbReference type="SMART" id="SM00726">
    <property type="entry name" value="UIM"/>
    <property type="match status" value="2"/>
</dbReference>
<dbReference type="SMART" id="SM00288">
    <property type="entry name" value="VHS"/>
    <property type="match status" value="1"/>
</dbReference>
<dbReference type="SUPFAM" id="SSF48464">
    <property type="entry name" value="ENTH/VHS domain"/>
    <property type="match status" value="1"/>
</dbReference>
<dbReference type="SUPFAM" id="SSF57903">
    <property type="entry name" value="FYVE/PHD zinc finger"/>
    <property type="match status" value="1"/>
</dbReference>
<dbReference type="PROSITE" id="PS50330">
    <property type="entry name" value="UIM"/>
    <property type="match status" value="2"/>
</dbReference>
<dbReference type="PROSITE" id="PS50179">
    <property type="entry name" value="VHS"/>
    <property type="match status" value="1"/>
</dbReference>
<dbReference type="PROSITE" id="PS50178">
    <property type="entry name" value="ZF_FYVE"/>
    <property type="match status" value="1"/>
</dbReference>
<comment type="function">
    <text evidence="1">Component of the ESCRT-0 complex which is the sorting receptor for ubiquitinated cargo proteins at the multivesicular body (MVB) and recruits ESCRT-I to the MVB outer membrane.</text>
</comment>
<comment type="subunit">
    <text>Component of the ESCRT-0 complex composed of HSE1 and VPS27.</text>
</comment>
<comment type="subcellular location">
    <subcellularLocation>
        <location evidence="1">Endosome membrane</location>
        <topology evidence="1">Peripheral membrane protein</topology>
        <orientation evidence="1">Cytoplasmic side</orientation>
    </subcellularLocation>
</comment>
<comment type="domain">
    <text>The FYVE domain is involved in the binding to phosphatidylinositol 3-phosphate (PtdIns(3)P) which is required for the association to endosomal membranes.</text>
</comment>
<comment type="domain">
    <text evidence="1">Both IUM domains are necessary for efficient binding to ubiquitin.</text>
</comment>
<comment type="similarity">
    <text evidence="6">Belongs to the VPS27 family.</text>
</comment>
<name>VPS27_KLULA</name>